<protein>
    <recommendedName>
        <fullName evidence="1">ATP-dependent protease subunit HslV</fullName>
        <ecNumber evidence="1">3.4.25.2</ecNumber>
    </recommendedName>
</protein>
<name>HSLV_LYSSC</name>
<proteinExistence type="inferred from homology"/>
<feature type="chain" id="PRO_1000100900" description="ATP-dependent protease subunit HslV">
    <location>
        <begin position="1"/>
        <end position="181"/>
    </location>
</feature>
<feature type="active site" evidence="1">
    <location>
        <position position="7"/>
    </location>
</feature>
<feature type="binding site" evidence="1">
    <location>
        <position position="165"/>
    </location>
    <ligand>
        <name>Na(+)</name>
        <dbReference type="ChEBI" id="CHEBI:29101"/>
    </ligand>
</feature>
<feature type="binding site" evidence="1">
    <location>
        <position position="168"/>
    </location>
    <ligand>
        <name>Na(+)</name>
        <dbReference type="ChEBI" id="CHEBI:29101"/>
    </ligand>
</feature>
<feature type="binding site" evidence="1">
    <location>
        <position position="171"/>
    </location>
    <ligand>
        <name>Na(+)</name>
        <dbReference type="ChEBI" id="CHEBI:29101"/>
    </ligand>
</feature>
<organism>
    <name type="scientific">Lysinibacillus sphaericus (strain C3-41)</name>
    <dbReference type="NCBI Taxonomy" id="444177"/>
    <lineage>
        <taxon>Bacteria</taxon>
        <taxon>Bacillati</taxon>
        <taxon>Bacillota</taxon>
        <taxon>Bacilli</taxon>
        <taxon>Bacillales</taxon>
        <taxon>Bacillaceae</taxon>
        <taxon>Lysinibacillus</taxon>
    </lineage>
</organism>
<dbReference type="EC" id="3.4.25.2" evidence="1"/>
<dbReference type="EMBL" id="CP000817">
    <property type="protein sequence ID" value="ACA39142.1"/>
    <property type="molecule type" value="Genomic_DNA"/>
</dbReference>
<dbReference type="RefSeq" id="WP_008181271.1">
    <property type="nucleotide sequence ID" value="NC_010382.1"/>
</dbReference>
<dbReference type="SMR" id="B1HQJ5"/>
<dbReference type="MEROPS" id="T01.007"/>
<dbReference type="EnsemblBacteria" id="ACA39142">
    <property type="protein sequence ID" value="ACA39142"/>
    <property type="gene ID" value="Bsph_1544"/>
</dbReference>
<dbReference type="GeneID" id="29443316"/>
<dbReference type="KEGG" id="lsp:Bsph_1544"/>
<dbReference type="HOGENOM" id="CLU_093872_1_0_9"/>
<dbReference type="Proteomes" id="UP000002164">
    <property type="component" value="Chromosome"/>
</dbReference>
<dbReference type="GO" id="GO:0009376">
    <property type="term" value="C:HslUV protease complex"/>
    <property type="evidence" value="ECO:0007669"/>
    <property type="project" value="UniProtKB-UniRule"/>
</dbReference>
<dbReference type="GO" id="GO:0005839">
    <property type="term" value="C:proteasome core complex"/>
    <property type="evidence" value="ECO:0007669"/>
    <property type="project" value="InterPro"/>
</dbReference>
<dbReference type="GO" id="GO:0046872">
    <property type="term" value="F:metal ion binding"/>
    <property type="evidence" value="ECO:0007669"/>
    <property type="project" value="UniProtKB-KW"/>
</dbReference>
<dbReference type="GO" id="GO:0004298">
    <property type="term" value="F:threonine-type endopeptidase activity"/>
    <property type="evidence" value="ECO:0007669"/>
    <property type="project" value="UniProtKB-KW"/>
</dbReference>
<dbReference type="GO" id="GO:0051603">
    <property type="term" value="P:proteolysis involved in protein catabolic process"/>
    <property type="evidence" value="ECO:0007669"/>
    <property type="project" value="InterPro"/>
</dbReference>
<dbReference type="CDD" id="cd01913">
    <property type="entry name" value="protease_HslV"/>
    <property type="match status" value="1"/>
</dbReference>
<dbReference type="Gene3D" id="3.60.20.10">
    <property type="entry name" value="Glutamine Phosphoribosylpyrophosphate, subunit 1, domain 1"/>
    <property type="match status" value="1"/>
</dbReference>
<dbReference type="HAMAP" id="MF_00248">
    <property type="entry name" value="HslV"/>
    <property type="match status" value="1"/>
</dbReference>
<dbReference type="InterPro" id="IPR022281">
    <property type="entry name" value="ATP-dep_Prtase_HsIV_su"/>
</dbReference>
<dbReference type="InterPro" id="IPR029055">
    <property type="entry name" value="Ntn_hydrolases_N"/>
</dbReference>
<dbReference type="InterPro" id="IPR001353">
    <property type="entry name" value="Proteasome_sua/b"/>
</dbReference>
<dbReference type="InterPro" id="IPR023333">
    <property type="entry name" value="Proteasome_suB-type"/>
</dbReference>
<dbReference type="NCBIfam" id="TIGR03692">
    <property type="entry name" value="ATP_dep_HslV"/>
    <property type="match status" value="1"/>
</dbReference>
<dbReference type="NCBIfam" id="NF003964">
    <property type="entry name" value="PRK05456.1"/>
    <property type="match status" value="1"/>
</dbReference>
<dbReference type="PANTHER" id="PTHR32194:SF0">
    <property type="entry name" value="ATP-DEPENDENT PROTEASE SUBUNIT HSLV"/>
    <property type="match status" value="1"/>
</dbReference>
<dbReference type="PANTHER" id="PTHR32194">
    <property type="entry name" value="METALLOPROTEASE TLDD"/>
    <property type="match status" value="1"/>
</dbReference>
<dbReference type="Pfam" id="PF00227">
    <property type="entry name" value="Proteasome"/>
    <property type="match status" value="1"/>
</dbReference>
<dbReference type="PIRSF" id="PIRSF039093">
    <property type="entry name" value="HslV"/>
    <property type="match status" value="1"/>
</dbReference>
<dbReference type="SUPFAM" id="SSF56235">
    <property type="entry name" value="N-terminal nucleophile aminohydrolases (Ntn hydrolases)"/>
    <property type="match status" value="1"/>
</dbReference>
<dbReference type="PROSITE" id="PS51476">
    <property type="entry name" value="PROTEASOME_BETA_2"/>
    <property type="match status" value="1"/>
</dbReference>
<comment type="function">
    <text evidence="1">Protease subunit of a proteasome-like degradation complex believed to be a general protein degrading machinery.</text>
</comment>
<comment type="catalytic activity">
    <reaction evidence="1">
        <text>ATP-dependent cleavage of peptide bonds with broad specificity.</text>
        <dbReference type="EC" id="3.4.25.2"/>
    </reaction>
</comment>
<comment type="activity regulation">
    <text evidence="1">Allosterically activated by HslU binding.</text>
</comment>
<comment type="subunit">
    <text evidence="1">A double ring-shaped homohexamer of HslV is capped on each side by a ring-shaped HslU homohexamer. The assembly of the HslU/HslV complex is dependent on binding of ATP.</text>
</comment>
<comment type="subcellular location">
    <subcellularLocation>
        <location evidence="1">Cytoplasm</location>
    </subcellularLocation>
</comment>
<comment type="similarity">
    <text evidence="1">Belongs to the peptidase T1B family. HslV subfamily.</text>
</comment>
<sequence length="181" mass="19175">MGQIHATTIFAVHHNGGCAMAGDGQVTLGNAVVMKGTAKKVRRLFNGQVLAGFAGSVADAFTLFEMFEGKLNEYNGNLQRAAVEVAKQWRGDKMLRQLEAMLLVMDKTTLLLVSGTGEVIEPDDGILAIGSGGNYALSAGRALKKYAGETMTAREIAEAALETAAEICVFTNHNIIVEALS</sequence>
<keyword id="KW-0021">Allosteric enzyme</keyword>
<keyword id="KW-0963">Cytoplasm</keyword>
<keyword id="KW-0378">Hydrolase</keyword>
<keyword id="KW-0479">Metal-binding</keyword>
<keyword id="KW-0645">Protease</keyword>
<keyword id="KW-0915">Sodium</keyword>
<keyword id="KW-0888">Threonine protease</keyword>
<evidence type="ECO:0000255" key="1">
    <source>
        <dbReference type="HAMAP-Rule" id="MF_00248"/>
    </source>
</evidence>
<reference key="1">
    <citation type="journal article" date="2008" name="J. Bacteriol.">
        <title>Complete genome sequence of the mosquitocidal bacterium Bacillus sphaericus C3-41 and comparison with those of closely related Bacillus species.</title>
        <authorList>
            <person name="Hu X."/>
            <person name="Fan W."/>
            <person name="Han B."/>
            <person name="Liu H."/>
            <person name="Zheng D."/>
            <person name="Li Q."/>
            <person name="Dong W."/>
            <person name="Yan J."/>
            <person name="Gao M."/>
            <person name="Berry C."/>
            <person name="Yuan Z."/>
        </authorList>
    </citation>
    <scope>NUCLEOTIDE SEQUENCE [LARGE SCALE GENOMIC DNA]</scope>
    <source>
        <strain>C3-41</strain>
    </source>
</reference>
<accession>B1HQJ5</accession>
<gene>
    <name evidence="1" type="primary">hslV</name>
    <name type="ordered locus">Bsph_1544</name>
</gene>